<protein>
    <recommendedName>
        <fullName>Nociceptin receptor</fullName>
    </recommendedName>
    <alternativeName>
        <fullName>K3 opiate receptor</fullName>
    </alternativeName>
    <alternativeName>
        <fullName>Kappa-type 3 opioid receptor</fullName>
        <shortName>KOR-3</shortName>
    </alternativeName>
    <alternativeName>
        <fullName>ORGC</fullName>
    </alternativeName>
    <alternativeName>
        <fullName>Orphanin FQ receptor</fullName>
    </alternativeName>
</protein>
<sequence length="370" mass="40610">MESLFPAPFWEVLYGSPLQGNLSLLSPNHSLLPPHLLLNASHGAFLPLGLKVTIVGLYLAVCVGGLLGNCLVMYVILRHTKMKTATNIYIFNLALADTAVLLTLPFQGTDVLLGFWPFGNALCKAVIAIDYYNMFTSAFTLTAMSVDRYVAICHPIRALDVRTSSKAQAVNVAIWALASIVGVPVAIMGSAQVEDEEIECLVEIPAPQDYWGPVFAVCIFLFSFVIPVLIISVCYSLMVRRLRGVRLLSGSREKDRNLRRITRLVLVVVAVFVGCWTPVQVFVLVQGLGVQPGSETAVAVLRFCTALGYVNSCLNPILYAFLDENFKACFRKFCCAPTRRREMQVSDRVRSIAKDVALACKTSETVPRPA</sequence>
<gene>
    <name type="primary">OPRL1</name>
</gene>
<dbReference type="EMBL" id="U72758">
    <property type="protein sequence ID" value="AAB39702.1"/>
    <property type="molecule type" value="mRNA"/>
</dbReference>
<dbReference type="RefSeq" id="NP_999341.1">
    <property type="nucleotide sequence ID" value="NM_214176.1"/>
</dbReference>
<dbReference type="SMR" id="P79292"/>
<dbReference type="FunCoup" id="P79292">
    <property type="interactions" value="477"/>
</dbReference>
<dbReference type="STRING" id="9823.ENSSSCP00000033028"/>
<dbReference type="BindingDB" id="P79292"/>
<dbReference type="GlyCosmos" id="P79292">
    <property type="glycosylation" value="3 sites, No reported glycans"/>
</dbReference>
<dbReference type="GlyGen" id="P79292">
    <property type="glycosylation" value="3 sites"/>
</dbReference>
<dbReference type="GeneID" id="397364"/>
<dbReference type="KEGG" id="ssc:397364"/>
<dbReference type="CTD" id="4987"/>
<dbReference type="InParanoid" id="P79292"/>
<dbReference type="OrthoDB" id="6076970at2759"/>
<dbReference type="Proteomes" id="UP000008227">
    <property type="component" value="Unplaced"/>
</dbReference>
<dbReference type="Proteomes" id="UP000314985">
    <property type="component" value="Unplaced"/>
</dbReference>
<dbReference type="Proteomes" id="UP000694570">
    <property type="component" value="Unplaced"/>
</dbReference>
<dbReference type="Proteomes" id="UP000694571">
    <property type="component" value="Unplaced"/>
</dbReference>
<dbReference type="Proteomes" id="UP000694720">
    <property type="component" value="Unplaced"/>
</dbReference>
<dbReference type="Proteomes" id="UP000694722">
    <property type="component" value="Unplaced"/>
</dbReference>
<dbReference type="Proteomes" id="UP000694723">
    <property type="component" value="Unplaced"/>
</dbReference>
<dbReference type="Proteomes" id="UP000694724">
    <property type="component" value="Unplaced"/>
</dbReference>
<dbReference type="Proteomes" id="UP000694725">
    <property type="component" value="Unplaced"/>
</dbReference>
<dbReference type="Proteomes" id="UP000694726">
    <property type="component" value="Unplaced"/>
</dbReference>
<dbReference type="Proteomes" id="UP000694727">
    <property type="component" value="Unplaced"/>
</dbReference>
<dbReference type="Proteomes" id="UP000694728">
    <property type="component" value="Unplaced"/>
</dbReference>
<dbReference type="GO" id="GO:0031410">
    <property type="term" value="C:cytoplasmic vesicle"/>
    <property type="evidence" value="ECO:0007669"/>
    <property type="project" value="UniProtKB-KW"/>
</dbReference>
<dbReference type="GO" id="GO:0043005">
    <property type="term" value="C:neuron projection"/>
    <property type="evidence" value="ECO:0000318"/>
    <property type="project" value="GO_Central"/>
</dbReference>
<dbReference type="GO" id="GO:0005886">
    <property type="term" value="C:plasma membrane"/>
    <property type="evidence" value="ECO:0000250"/>
    <property type="project" value="UniProtKB"/>
</dbReference>
<dbReference type="GO" id="GO:0004930">
    <property type="term" value="F:G protein-coupled receptor activity"/>
    <property type="evidence" value="ECO:0000250"/>
    <property type="project" value="UniProtKB"/>
</dbReference>
<dbReference type="GO" id="GO:0042923">
    <property type="term" value="F:neuropeptide binding"/>
    <property type="evidence" value="ECO:0000318"/>
    <property type="project" value="GO_Central"/>
</dbReference>
<dbReference type="GO" id="GO:0001626">
    <property type="term" value="F:nociceptin receptor activity"/>
    <property type="evidence" value="ECO:0000250"/>
    <property type="project" value="UniProtKB"/>
</dbReference>
<dbReference type="GO" id="GO:0007193">
    <property type="term" value="P:adenylate cyclase-inhibiting G protein-coupled receptor signaling pathway"/>
    <property type="evidence" value="ECO:0000250"/>
    <property type="project" value="UniProtKB"/>
</dbReference>
<dbReference type="GO" id="GO:0007218">
    <property type="term" value="P:neuropeptide signaling pathway"/>
    <property type="evidence" value="ECO:0000318"/>
    <property type="project" value="GO_Central"/>
</dbReference>
<dbReference type="GO" id="GO:0019233">
    <property type="term" value="P:sensory perception of pain"/>
    <property type="evidence" value="ECO:0000250"/>
    <property type="project" value="UniProtKB"/>
</dbReference>
<dbReference type="CDD" id="cd15092">
    <property type="entry name" value="7tmA_NOFQ_opioid_R"/>
    <property type="match status" value="1"/>
</dbReference>
<dbReference type="FunFam" id="1.20.1070.10:FF:000014">
    <property type="entry name" value="Kappa-type opioid receptor 1"/>
    <property type="match status" value="1"/>
</dbReference>
<dbReference type="Gene3D" id="1.20.1070.10">
    <property type="entry name" value="Rhodopsin 7-helix transmembrane proteins"/>
    <property type="match status" value="1"/>
</dbReference>
<dbReference type="InterPro" id="IPR000276">
    <property type="entry name" value="GPCR_Rhodpsn"/>
</dbReference>
<dbReference type="InterPro" id="IPR017452">
    <property type="entry name" value="GPCR_Rhodpsn_7TM"/>
</dbReference>
<dbReference type="InterPro" id="IPR001418">
    <property type="entry name" value="Opioid_rcpt"/>
</dbReference>
<dbReference type="InterPro" id="IPR001420">
    <property type="entry name" value="X_opioid_rcpt"/>
</dbReference>
<dbReference type="PANTHER" id="PTHR24229">
    <property type="entry name" value="NEUROPEPTIDES RECEPTOR"/>
    <property type="match status" value="1"/>
</dbReference>
<dbReference type="PANTHER" id="PTHR24229:SF11">
    <property type="entry name" value="NOCICEPTIN RECEPTOR"/>
    <property type="match status" value="1"/>
</dbReference>
<dbReference type="Pfam" id="PF00001">
    <property type="entry name" value="7tm_1"/>
    <property type="match status" value="1"/>
</dbReference>
<dbReference type="PRINTS" id="PR00237">
    <property type="entry name" value="GPCRRHODOPSN"/>
</dbReference>
<dbReference type="PRINTS" id="PR00384">
    <property type="entry name" value="OPIOIDR"/>
</dbReference>
<dbReference type="PRINTS" id="PR00547">
    <property type="entry name" value="XOPIOIDR"/>
</dbReference>
<dbReference type="SMART" id="SM01381">
    <property type="entry name" value="7TM_GPCR_Srsx"/>
    <property type="match status" value="1"/>
</dbReference>
<dbReference type="SUPFAM" id="SSF81321">
    <property type="entry name" value="Family A G protein-coupled receptor-like"/>
    <property type="match status" value="1"/>
</dbReference>
<dbReference type="PROSITE" id="PS00237">
    <property type="entry name" value="G_PROTEIN_RECEP_F1_1"/>
    <property type="match status" value="1"/>
</dbReference>
<dbReference type="PROSITE" id="PS50262">
    <property type="entry name" value="G_PROTEIN_RECEP_F1_2"/>
    <property type="match status" value="1"/>
</dbReference>
<proteinExistence type="evidence at transcript level"/>
<keyword id="KW-0085">Behavior</keyword>
<keyword id="KW-1003">Cell membrane</keyword>
<keyword id="KW-0968">Cytoplasmic vesicle</keyword>
<keyword id="KW-1015">Disulfide bond</keyword>
<keyword id="KW-0297">G-protein coupled receptor</keyword>
<keyword id="KW-0325">Glycoprotein</keyword>
<keyword id="KW-0449">Lipoprotein</keyword>
<keyword id="KW-0472">Membrane</keyword>
<keyword id="KW-0564">Palmitate</keyword>
<keyword id="KW-0597">Phosphoprotein</keyword>
<keyword id="KW-0675">Receptor</keyword>
<keyword id="KW-1185">Reference proteome</keyword>
<keyword id="KW-0807">Transducer</keyword>
<keyword id="KW-0812">Transmembrane</keyword>
<keyword id="KW-1133">Transmembrane helix</keyword>
<reference key="1">
    <citation type="journal article" date="1999" name="Eur. J. Pharmacol.">
        <title>Cloning, expression and functional role of a nociceptin/orphanin FQ receptor in the porcine gastrointestinal tract.</title>
        <authorList>
            <person name="Osinski M.A."/>
            <person name="Pampusch M.S."/>
            <person name="Murtaugh M.P."/>
            <person name="Brown D.R."/>
        </authorList>
    </citation>
    <scope>NUCLEOTIDE SEQUENCE [MRNA]</scope>
    <scope>TISSUE SPECIFICITY</scope>
    <source>
        <tissue>Brain cortex</tissue>
    </source>
</reference>
<organism>
    <name type="scientific">Sus scrofa</name>
    <name type="common">Pig</name>
    <dbReference type="NCBI Taxonomy" id="9823"/>
    <lineage>
        <taxon>Eukaryota</taxon>
        <taxon>Metazoa</taxon>
        <taxon>Chordata</taxon>
        <taxon>Craniata</taxon>
        <taxon>Vertebrata</taxon>
        <taxon>Euteleostomi</taxon>
        <taxon>Mammalia</taxon>
        <taxon>Eutheria</taxon>
        <taxon>Laurasiatheria</taxon>
        <taxon>Artiodactyla</taxon>
        <taxon>Suina</taxon>
        <taxon>Suidae</taxon>
        <taxon>Sus</taxon>
    </lineage>
</organism>
<name>OPRX_PIG</name>
<comment type="function">
    <text evidence="1">G-protein coupled opioid receptor that functions as a receptor for the endogenous neuropeptide nociceptin. Ligand binding causes a conformation change that triggers signaling via guanine nucleotide-binding proteins (G proteins) and modulates the activity of down-stream effectors. Signaling via G proteins mediates inhibition of adenylate cyclase activity and calcium channel activity. Arrestins modulate signaling via G proteins and mediate the activation of alternative signaling pathways that lead to the activation of MAP kinases. Plays a role in modulating nociception and the perception of pain. Plays a role in the regulation of locomotor activity by the neuropeptide nociceptin (By similarity).</text>
</comment>
<comment type="subcellular location">
    <subcellularLocation>
        <location evidence="1">Cell membrane</location>
        <topology evidence="1">Multi-pass membrane protein</topology>
    </subcellularLocation>
    <subcellularLocation>
        <location evidence="1">Cytoplasmic vesicle</location>
    </subcellularLocation>
    <text evidence="1">Ligand binding leads to receptor internalization into cytoplasmic vesicles, decreasing the amount of available receptor at the cell surface. Internalization requires phosphorylation at Ser-363. Can recycle to the cell membrane (By similarity).</text>
</comment>
<comment type="tissue specificity">
    <text evidence="4">Detected in brain cortex, stomach, ileum, jejunum and colon.</text>
</comment>
<comment type="PTM">
    <text evidence="1">Phosphorylation at Ser-363 requires GRK3.</text>
</comment>
<comment type="similarity">
    <text evidence="3">Belongs to the G-protein coupled receptor 1 family.</text>
</comment>
<accession>P79292</accession>
<feature type="chain" id="PRO_0000069982" description="Nociceptin receptor">
    <location>
        <begin position="1"/>
        <end position="370"/>
    </location>
</feature>
<feature type="topological domain" description="Extracellular" evidence="1">
    <location>
        <begin position="1"/>
        <end position="48"/>
    </location>
</feature>
<feature type="transmembrane region" description="Helical; Name=1" evidence="1">
    <location>
        <begin position="49"/>
        <end position="74"/>
    </location>
</feature>
<feature type="topological domain" description="Cytoplasmic" evidence="1">
    <location>
        <begin position="75"/>
        <end position="87"/>
    </location>
</feature>
<feature type="transmembrane region" description="Helical; Name=2" evidence="1">
    <location>
        <begin position="88"/>
        <end position="109"/>
    </location>
</feature>
<feature type="topological domain" description="Extracellular" evidence="1">
    <location>
        <begin position="110"/>
        <end position="124"/>
    </location>
</feature>
<feature type="transmembrane region" description="Helical; Name=3" evidence="1">
    <location>
        <begin position="125"/>
        <end position="146"/>
    </location>
</feature>
<feature type="topological domain" description="Cytoplasmic" evidence="1">
    <location>
        <begin position="147"/>
        <end position="165"/>
    </location>
</feature>
<feature type="transmembrane region" description="Helical; Name=4" evidence="1">
    <location>
        <begin position="166"/>
        <end position="188"/>
    </location>
</feature>
<feature type="topological domain" description="Extracellular" evidence="1">
    <location>
        <begin position="189"/>
        <end position="211"/>
    </location>
</feature>
<feature type="transmembrane region" description="Helical; Name=5" evidence="1">
    <location>
        <begin position="212"/>
        <end position="236"/>
    </location>
</feature>
<feature type="topological domain" description="Cytoplasmic" evidence="1">
    <location>
        <begin position="237"/>
        <end position="264"/>
    </location>
</feature>
<feature type="transmembrane region" description="Helical; Name=6" evidence="1">
    <location>
        <begin position="265"/>
        <end position="285"/>
    </location>
</feature>
<feature type="topological domain" description="Extracellular" evidence="1">
    <location>
        <begin position="286"/>
        <end position="300"/>
    </location>
</feature>
<feature type="transmembrane region" description="Helical; Name=7" evidence="1">
    <location>
        <begin position="301"/>
        <end position="322"/>
    </location>
</feature>
<feature type="topological domain" description="Cytoplasmic" evidence="1">
    <location>
        <begin position="323"/>
        <end position="370"/>
    </location>
</feature>
<feature type="site" description="Important for G protein-mediated signaling" evidence="1">
    <location>
        <position position="110"/>
    </location>
</feature>
<feature type="site" description="Important for G protein-mediated signaling" evidence="1">
    <location>
        <position position="130"/>
    </location>
</feature>
<feature type="lipid moiety-binding region" description="S-palmitoyl cysteine" evidence="2">
    <location>
        <position position="334"/>
    </location>
</feature>
<feature type="glycosylation site" description="N-linked (GlcNAc...) asparagine" evidence="2">
    <location>
        <position position="21"/>
    </location>
</feature>
<feature type="glycosylation site" description="N-linked (GlcNAc...) asparagine" evidence="2">
    <location>
        <position position="28"/>
    </location>
</feature>
<feature type="glycosylation site" description="N-linked (GlcNAc...) asparagine" evidence="2">
    <location>
        <position position="39"/>
    </location>
</feature>
<feature type="disulfide bond" evidence="3">
    <location>
        <begin position="123"/>
        <end position="200"/>
    </location>
</feature>
<evidence type="ECO:0000250" key="1"/>
<evidence type="ECO:0000255" key="2"/>
<evidence type="ECO:0000255" key="3">
    <source>
        <dbReference type="PROSITE-ProRule" id="PRU00521"/>
    </source>
</evidence>
<evidence type="ECO:0000269" key="4">
    <source>
    </source>
</evidence>